<feature type="chain" id="PRO_1000023208" description="Thymidylate kinase">
    <location>
        <begin position="1"/>
        <end position="212"/>
    </location>
</feature>
<feature type="binding site" evidence="1">
    <location>
        <begin position="10"/>
        <end position="17"/>
    </location>
    <ligand>
        <name>ATP</name>
        <dbReference type="ChEBI" id="CHEBI:30616"/>
    </ligand>
</feature>
<dbReference type="EC" id="2.7.4.9" evidence="1"/>
<dbReference type="EMBL" id="CR954253">
    <property type="protein sequence ID" value="CAI98420.1"/>
    <property type="molecule type" value="Genomic_DNA"/>
</dbReference>
<dbReference type="RefSeq" id="WP_003621971.1">
    <property type="nucleotide sequence ID" value="NZ_JQAV01000002.1"/>
</dbReference>
<dbReference type="SMR" id="Q1G923"/>
<dbReference type="STRING" id="390333.Ldb1631"/>
<dbReference type="KEGG" id="ldb:Ldb1631"/>
<dbReference type="PATRIC" id="fig|390333.13.peg.990"/>
<dbReference type="eggNOG" id="COG0125">
    <property type="taxonomic scope" value="Bacteria"/>
</dbReference>
<dbReference type="HOGENOM" id="CLU_049131_0_2_9"/>
<dbReference type="BioCyc" id="LDEL390333:LDB_RS07060-MONOMER"/>
<dbReference type="Proteomes" id="UP000001259">
    <property type="component" value="Chromosome"/>
</dbReference>
<dbReference type="GO" id="GO:0005829">
    <property type="term" value="C:cytosol"/>
    <property type="evidence" value="ECO:0007669"/>
    <property type="project" value="TreeGrafter"/>
</dbReference>
<dbReference type="GO" id="GO:0005524">
    <property type="term" value="F:ATP binding"/>
    <property type="evidence" value="ECO:0007669"/>
    <property type="project" value="UniProtKB-UniRule"/>
</dbReference>
<dbReference type="GO" id="GO:0004798">
    <property type="term" value="F:dTMP kinase activity"/>
    <property type="evidence" value="ECO:0007669"/>
    <property type="project" value="UniProtKB-UniRule"/>
</dbReference>
<dbReference type="GO" id="GO:0006233">
    <property type="term" value="P:dTDP biosynthetic process"/>
    <property type="evidence" value="ECO:0007669"/>
    <property type="project" value="InterPro"/>
</dbReference>
<dbReference type="GO" id="GO:0006235">
    <property type="term" value="P:dTTP biosynthetic process"/>
    <property type="evidence" value="ECO:0007669"/>
    <property type="project" value="UniProtKB-UniRule"/>
</dbReference>
<dbReference type="GO" id="GO:0006227">
    <property type="term" value="P:dUDP biosynthetic process"/>
    <property type="evidence" value="ECO:0007669"/>
    <property type="project" value="TreeGrafter"/>
</dbReference>
<dbReference type="CDD" id="cd01672">
    <property type="entry name" value="TMPK"/>
    <property type="match status" value="1"/>
</dbReference>
<dbReference type="FunFam" id="3.40.50.300:FF:000225">
    <property type="entry name" value="Thymidylate kinase"/>
    <property type="match status" value="1"/>
</dbReference>
<dbReference type="Gene3D" id="3.40.50.300">
    <property type="entry name" value="P-loop containing nucleotide triphosphate hydrolases"/>
    <property type="match status" value="1"/>
</dbReference>
<dbReference type="HAMAP" id="MF_00165">
    <property type="entry name" value="Thymidylate_kinase"/>
    <property type="match status" value="1"/>
</dbReference>
<dbReference type="InterPro" id="IPR027417">
    <property type="entry name" value="P-loop_NTPase"/>
</dbReference>
<dbReference type="InterPro" id="IPR039430">
    <property type="entry name" value="Thymidylate_kin-like_dom"/>
</dbReference>
<dbReference type="InterPro" id="IPR018094">
    <property type="entry name" value="Thymidylate_kinase"/>
</dbReference>
<dbReference type="NCBIfam" id="TIGR00041">
    <property type="entry name" value="DTMP_kinase"/>
    <property type="match status" value="1"/>
</dbReference>
<dbReference type="PANTHER" id="PTHR10344">
    <property type="entry name" value="THYMIDYLATE KINASE"/>
    <property type="match status" value="1"/>
</dbReference>
<dbReference type="PANTHER" id="PTHR10344:SF4">
    <property type="entry name" value="UMP-CMP KINASE 2, MITOCHONDRIAL"/>
    <property type="match status" value="1"/>
</dbReference>
<dbReference type="Pfam" id="PF02223">
    <property type="entry name" value="Thymidylate_kin"/>
    <property type="match status" value="1"/>
</dbReference>
<dbReference type="SUPFAM" id="SSF52540">
    <property type="entry name" value="P-loop containing nucleoside triphosphate hydrolases"/>
    <property type="match status" value="1"/>
</dbReference>
<keyword id="KW-0067">ATP-binding</keyword>
<keyword id="KW-0418">Kinase</keyword>
<keyword id="KW-0545">Nucleotide biosynthesis</keyword>
<keyword id="KW-0547">Nucleotide-binding</keyword>
<keyword id="KW-1185">Reference proteome</keyword>
<keyword id="KW-0808">Transferase</keyword>
<accession>Q1G923</accession>
<gene>
    <name evidence="1" type="primary">tmk</name>
    <name type="ordered locus">Ldb1631</name>
</gene>
<organism>
    <name type="scientific">Lactobacillus delbrueckii subsp. bulgaricus (strain ATCC 11842 / DSM 20081 / BCRC 10696 / JCM 1002 / NBRC 13953 / NCIMB 11778 / NCTC 12712 / WDCM 00102 / Lb 14)</name>
    <dbReference type="NCBI Taxonomy" id="390333"/>
    <lineage>
        <taxon>Bacteria</taxon>
        <taxon>Bacillati</taxon>
        <taxon>Bacillota</taxon>
        <taxon>Bacilli</taxon>
        <taxon>Lactobacillales</taxon>
        <taxon>Lactobacillaceae</taxon>
        <taxon>Lactobacillus</taxon>
    </lineage>
</organism>
<name>KTHY_LACDA</name>
<evidence type="ECO:0000255" key="1">
    <source>
        <dbReference type="HAMAP-Rule" id="MF_00165"/>
    </source>
</evidence>
<protein>
    <recommendedName>
        <fullName evidence="1">Thymidylate kinase</fullName>
        <ecNumber evidence="1">2.7.4.9</ecNumber>
    </recommendedName>
    <alternativeName>
        <fullName evidence="1">dTMP kinase</fullName>
    </alternativeName>
</protein>
<reference key="1">
    <citation type="journal article" date="2006" name="Proc. Natl. Acad. Sci. U.S.A.">
        <title>The complete genome sequence of Lactobacillus bulgaricus reveals extensive and ongoing reductive evolution.</title>
        <authorList>
            <person name="van de Guchte M."/>
            <person name="Penaud S."/>
            <person name="Grimaldi C."/>
            <person name="Barbe V."/>
            <person name="Bryson K."/>
            <person name="Nicolas P."/>
            <person name="Robert C."/>
            <person name="Oztas S."/>
            <person name="Mangenot S."/>
            <person name="Couloux A."/>
            <person name="Loux V."/>
            <person name="Dervyn R."/>
            <person name="Bossy R."/>
            <person name="Bolotin A."/>
            <person name="Batto J.-M."/>
            <person name="Walunas T."/>
            <person name="Gibrat J.-F."/>
            <person name="Bessieres P."/>
            <person name="Weissenbach J."/>
            <person name="Ehrlich S.D."/>
            <person name="Maguin E."/>
        </authorList>
    </citation>
    <scope>NUCLEOTIDE SEQUENCE [LARGE SCALE GENOMIC DNA]</scope>
    <source>
        <strain>ATCC 11842 / DSM 20081 / BCRC 10696 / JCM 1002 / NBRC 13953 / NCIMB 11778 / NCTC 12712 / WDCM 00102 / Lb 14</strain>
    </source>
</reference>
<comment type="function">
    <text evidence="1">Phosphorylation of dTMP to form dTDP in both de novo and salvage pathways of dTTP synthesis.</text>
</comment>
<comment type="catalytic activity">
    <reaction evidence="1">
        <text>dTMP + ATP = dTDP + ADP</text>
        <dbReference type="Rhea" id="RHEA:13517"/>
        <dbReference type="ChEBI" id="CHEBI:30616"/>
        <dbReference type="ChEBI" id="CHEBI:58369"/>
        <dbReference type="ChEBI" id="CHEBI:63528"/>
        <dbReference type="ChEBI" id="CHEBI:456216"/>
        <dbReference type="EC" id="2.7.4.9"/>
    </reaction>
</comment>
<comment type="similarity">
    <text evidence="1">Belongs to the thymidylate kinase family.</text>
</comment>
<proteinExistence type="inferred from homology"/>
<sequence length="212" mass="23264">MQGYFITFEGPDGAGKTTVINEVVKAIQGQCKREILVTREPGGSKIAEKIRDIILDPANTEMNAKTEALLYAASRSQHVSEIINPALKRGDLVMSDRFVDSSLAYQGQGRGLGIDEVAQINAFATGHLEPDLTIFLDLDPAQGLARIAKVRSGSEDRLEQEKLAFHEEVYRGYQKVNQAHPDRVKVVDASQDLPQVVAASVKLVKSTFPELF</sequence>